<sequence length="544" mass="57951">MAKRIIYNENARRALERGIDILAEAVAVTLGPKGRNVVLEKKFGAPQIVNDGVTIAKEIELEDHIENTGVALIRQAASKTNDAAGDGTTTATVLAHAIVKEGLRNVAAGANAILLKRGIDKATGFLVDRIKEHARPVEDSKSIAQVGSISAGNDDEVGQMIAEAMDKVGKEGVISLEEGKSVTTELEITEGMRFDKGYISPYFATDPERMEAIFDEPFLLLTDKKIALVQDLVPVLEQVARAGRPLVIIAEDIEKEALATLVVNRLRGVLNVAAVKAPGFGDRRKAMLEDIAILTGGQLITEDAGLKLENTKLESLGKARRITITKDSTTIVAEGNDVAVKGRVEQIRRQMEETESSYDKEKLQERLAKLSGGVAVVKVGAATETEMKDKKLRLEDAINATKAAVEEGIVPGGGTTLAHLTPELEVWANSNLKDEELTGALIVARALPAPLKRIAENAGQNGAVIAERVKEKAFNVGFNAATNEFVDMFEAGIVDPAKVTRSALQNAASIAGMVLTTECIVVDKPEPKDNAPAGAGAGGGDFDY</sequence>
<reference key="1">
    <citation type="journal article" date="2001" name="DNA Res.">
        <title>Complete genomic sequence of the filamentous nitrogen-fixing cyanobacterium Anabaena sp. strain PCC 7120.</title>
        <authorList>
            <person name="Kaneko T."/>
            <person name="Nakamura Y."/>
            <person name="Wolk C.P."/>
            <person name="Kuritz T."/>
            <person name="Sasamoto S."/>
            <person name="Watanabe A."/>
            <person name="Iriguchi M."/>
            <person name="Ishikawa A."/>
            <person name="Kawashima K."/>
            <person name="Kimura T."/>
            <person name="Kishida Y."/>
            <person name="Kohara M."/>
            <person name="Matsumoto M."/>
            <person name="Matsuno A."/>
            <person name="Muraki A."/>
            <person name="Nakazaki N."/>
            <person name="Shimpo S."/>
            <person name="Sugimoto M."/>
            <person name="Takazawa M."/>
            <person name="Yamada M."/>
            <person name="Yasuda M."/>
            <person name="Tabata S."/>
        </authorList>
    </citation>
    <scope>NUCLEOTIDE SEQUENCE [LARGE SCALE GENOMIC DNA]</scope>
    <source>
        <strain>PCC 7120 / SAG 25.82 / UTEX 2576</strain>
    </source>
</reference>
<protein>
    <recommendedName>
        <fullName evidence="1">Chaperonin GroEL 1</fullName>
        <ecNumber evidence="1">5.6.1.7</ecNumber>
    </recommendedName>
    <alternativeName>
        <fullName evidence="1">60 kDa chaperonin 1</fullName>
    </alternativeName>
    <alternativeName>
        <fullName evidence="1">Chaperonin-60 1</fullName>
        <shortName evidence="1">Cpn60 1</shortName>
    </alternativeName>
</protein>
<name>CH601_NOSS1</name>
<proteinExistence type="inferred from homology"/>
<accession>Q8YQZ8</accession>
<comment type="function">
    <text evidence="1">Together with its co-chaperonin GroES, plays an essential role in assisting protein folding. The GroEL-GroES system forms a nano-cage that allows encapsulation of the non-native substrate proteins and provides a physical environment optimized to promote and accelerate protein folding.</text>
</comment>
<comment type="catalytic activity">
    <reaction evidence="1">
        <text>ATP + H2O + a folded polypeptide = ADP + phosphate + an unfolded polypeptide.</text>
        <dbReference type="EC" id="5.6.1.7"/>
    </reaction>
</comment>
<comment type="subunit">
    <text evidence="1">Forms a cylinder of 14 subunits composed of two heptameric rings stacked back-to-back. Interacts with the co-chaperonin GroES.</text>
</comment>
<comment type="subcellular location">
    <subcellularLocation>
        <location evidence="1">Cytoplasm</location>
    </subcellularLocation>
</comment>
<comment type="similarity">
    <text evidence="1">Belongs to the chaperonin (HSP60) family.</text>
</comment>
<gene>
    <name evidence="1" type="primary">groEL1</name>
    <name evidence="1" type="synonym">groL1</name>
    <name type="ordered locus">alr3662</name>
</gene>
<organism>
    <name type="scientific">Nostoc sp. (strain PCC 7120 / SAG 25.82 / UTEX 2576)</name>
    <dbReference type="NCBI Taxonomy" id="103690"/>
    <lineage>
        <taxon>Bacteria</taxon>
        <taxon>Bacillati</taxon>
        <taxon>Cyanobacteriota</taxon>
        <taxon>Cyanophyceae</taxon>
        <taxon>Nostocales</taxon>
        <taxon>Nostocaceae</taxon>
        <taxon>Nostoc</taxon>
    </lineage>
</organism>
<feature type="chain" id="PRO_0000063261" description="Chaperonin GroEL 1">
    <location>
        <begin position="1"/>
        <end position="544"/>
    </location>
</feature>
<feature type="region of interest" description="Disordered" evidence="2">
    <location>
        <begin position="525"/>
        <end position="544"/>
    </location>
</feature>
<feature type="compositionally biased region" description="Gly residues" evidence="2">
    <location>
        <begin position="535"/>
        <end position="544"/>
    </location>
</feature>
<feature type="binding site" evidence="1">
    <location>
        <begin position="29"/>
        <end position="32"/>
    </location>
    <ligand>
        <name>ATP</name>
        <dbReference type="ChEBI" id="CHEBI:30616"/>
    </ligand>
</feature>
<feature type="binding site" evidence="1">
    <location>
        <begin position="86"/>
        <end position="90"/>
    </location>
    <ligand>
        <name>ATP</name>
        <dbReference type="ChEBI" id="CHEBI:30616"/>
    </ligand>
</feature>
<feature type="binding site" evidence="1">
    <location>
        <position position="413"/>
    </location>
    <ligand>
        <name>ATP</name>
        <dbReference type="ChEBI" id="CHEBI:30616"/>
    </ligand>
</feature>
<feature type="binding site" evidence="1">
    <location>
        <begin position="479"/>
        <end position="481"/>
    </location>
    <ligand>
        <name>ATP</name>
        <dbReference type="ChEBI" id="CHEBI:30616"/>
    </ligand>
</feature>
<feature type="binding site" evidence="1">
    <location>
        <position position="495"/>
    </location>
    <ligand>
        <name>ATP</name>
        <dbReference type="ChEBI" id="CHEBI:30616"/>
    </ligand>
</feature>
<keyword id="KW-0067">ATP-binding</keyword>
<keyword id="KW-0143">Chaperone</keyword>
<keyword id="KW-0963">Cytoplasm</keyword>
<keyword id="KW-0413">Isomerase</keyword>
<keyword id="KW-0547">Nucleotide-binding</keyword>
<keyword id="KW-1185">Reference proteome</keyword>
<evidence type="ECO:0000255" key="1">
    <source>
        <dbReference type="HAMAP-Rule" id="MF_00600"/>
    </source>
</evidence>
<evidence type="ECO:0000256" key="2">
    <source>
        <dbReference type="SAM" id="MobiDB-lite"/>
    </source>
</evidence>
<dbReference type="EC" id="5.6.1.7" evidence="1"/>
<dbReference type="EMBL" id="BA000019">
    <property type="protein sequence ID" value="BAB75361.1"/>
    <property type="molecule type" value="Genomic_DNA"/>
</dbReference>
<dbReference type="PIR" id="AG2263">
    <property type="entry name" value="AG2263"/>
</dbReference>
<dbReference type="SMR" id="Q8YQZ8"/>
<dbReference type="STRING" id="103690.gene:10495704"/>
<dbReference type="KEGG" id="ana:alr3662"/>
<dbReference type="eggNOG" id="COG0459">
    <property type="taxonomic scope" value="Bacteria"/>
</dbReference>
<dbReference type="OrthoDB" id="9766614at2"/>
<dbReference type="Proteomes" id="UP000002483">
    <property type="component" value="Chromosome"/>
</dbReference>
<dbReference type="GO" id="GO:0005737">
    <property type="term" value="C:cytoplasm"/>
    <property type="evidence" value="ECO:0007669"/>
    <property type="project" value="UniProtKB-SubCell"/>
</dbReference>
<dbReference type="GO" id="GO:0005524">
    <property type="term" value="F:ATP binding"/>
    <property type="evidence" value="ECO:0007669"/>
    <property type="project" value="UniProtKB-UniRule"/>
</dbReference>
<dbReference type="GO" id="GO:0140662">
    <property type="term" value="F:ATP-dependent protein folding chaperone"/>
    <property type="evidence" value="ECO:0007669"/>
    <property type="project" value="InterPro"/>
</dbReference>
<dbReference type="GO" id="GO:0016853">
    <property type="term" value="F:isomerase activity"/>
    <property type="evidence" value="ECO:0007669"/>
    <property type="project" value="UniProtKB-KW"/>
</dbReference>
<dbReference type="GO" id="GO:0051082">
    <property type="term" value="F:unfolded protein binding"/>
    <property type="evidence" value="ECO:0007669"/>
    <property type="project" value="UniProtKB-UniRule"/>
</dbReference>
<dbReference type="GO" id="GO:0042026">
    <property type="term" value="P:protein refolding"/>
    <property type="evidence" value="ECO:0007669"/>
    <property type="project" value="UniProtKB-UniRule"/>
</dbReference>
<dbReference type="CDD" id="cd03344">
    <property type="entry name" value="GroEL"/>
    <property type="match status" value="1"/>
</dbReference>
<dbReference type="FunFam" id="3.50.7.10:FF:000001">
    <property type="entry name" value="60 kDa chaperonin"/>
    <property type="match status" value="1"/>
</dbReference>
<dbReference type="Gene3D" id="3.50.7.10">
    <property type="entry name" value="GroEL"/>
    <property type="match status" value="1"/>
</dbReference>
<dbReference type="Gene3D" id="1.10.560.10">
    <property type="entry name" value="GroEL-like equatorial domain"/>
    <property type="match status" value="1"/>
</dbReference>
<dbReference type="Gene3D" id="3.30.260.10">
    <property type="entry name" value="TCP-1-like chaperonin intermediate domain"/>
    <property type="match status" value="1"/>
</dbReference>
<dbReference type="HAMAP" id="MF_00600">
    <property type="entry name" value="CH60"/>
    <property type="match status" value="1"/>
</dbReference>
<dbReference type="InterPro" id="IPR018370">
    <property type="entry name" value="Chaperonin_Cpn60_CS"/>
</dbReference>
<dbReference type="InterPro" id="IPR001844">
    <property type="entry name" value="Cpn60/GroEL"/>
</dbReference>
<dbReference type="InterPro" id="IPR002423">
    <property type="entry name" value="Cpn60/GroEL/TCP-1"/>
</dbReference>
<dbReference type="InterPro" id="IPR027409">
    <property type="entry name" value="GroEL-like_apical_dom_sf"/>
</dbReference>
<dbReference type="InterPro" id="IPR027413">
    <property type="entry name" value="GROEL-like_equatorial_sf"/>
</dbReference>
<dbReference type="InterPro" id="IPR027410">
    <property type="entry name" value="TCP-1-like_intermed_sf"/>
</dbReference>
<dbReference type="NCBIfam" id="TIGR02348">
    <property type="entry name" value="GroEL"/>
    <property type="match status" value="1"/>
</dbReference>
<dbReference type="NCBIfam" id="NF000592">
    <property type="entry name" value="PRK00013.1"/>
    <property type="match status" value="1"/>
</dbReference>
<dbReference type="NCBIfam" id="NF009487">
    <property type="entry name" value="PRK12849.1"/>
    <property type="match status" value="1"/>
</dbReference>
<dbReference type="NCBIfam" id="NF009488">
    <property type="entry name" value="PRK12850.1"/>
    <property type="match status" value="1"/>
</dbReference>
<dbReference type="NCBIfam" id="NF009489">
    <property type="entry name" value="PRK12851.1"/>
    <property type="match status" value="1"/>
</dbReference>
<dbReference type="PANTHER" id="PTHR45633">
    <property type="entry name" value="60 KDA HEAT SHOCK PROTEIN, MITOCHONDRIAL"/>
    <property type="match status" value="1"/>
</dbReference>
<dbReference type="Pfam" id="PF00118">
    <property type="entry name" value="Cpn60_TCP1"/>
    <property type="match status" value="1"/>
</dbReference>
<dbReference type="PRINTS" id="PR00298">
    <property type="entry name" value="CHAPERONIN60"/>
</dbReference>
<dbReference type="SUPFAM" id="SSF52029">
    <property type="entry name" value="GroEL apical domain-like"/>
    <property type="match status" value="1"/>
</dbReference>
<dbReference type="SUPFAM" id="SSF48592">
    <property type="entry name" value="GroEL equatorial domain-like"/>
    <property type="match status" value="1"/>
</dbReference>
<dbReference type="SUPFAM" id="SSF54849">
    <property type="entry name" value="GroEL-intermediate domain like"/>
    <property type="match status" value="1"/>
</dbReference>
<dbReference type="PROSITE" id="PS00296">
    <property type="entry name" value="CHAPERONINS_CPN60"/>
    <property type="match status" value="1"/>
</dbReference>